<feature type="chain" id="PRO_0000253672" description="UDP-3-O-acyl-N-acetylglucosamine deacetylase">
    <location>
        <begin position="1"/>
        <end position="304"/>
    </location>
</feature>
<feature type="active site" description="Proton donor" evidence="1">
    <location>
        <position position="264"/>
    </location>
</feature>
<feature type="binding site" evidence="1">
    <location>
        <position position="78"/>
    </location>
    <ligand>
        <name>Zn(2+)</name>
        <dbReference type="ChEBI" id="CHEBI:29105"/>
    </ligand>
</feature>
<feature type="binding site" evidence="1">
    <location>
        <position position="237"/>
    </location>
    <ligand>
        <name>Zn(2+)</name>
        <dbReference type="ChEBI" id="CHEBI:29105"/>
    </ligand>
</feature>
<feature type="binding site" evidence="1">
    <location>
        <position position="241"/>
    </location>
    <ligand>
        <name>Zn(2+)</name>
        <dbReference type="ChEBI" id="CHEBI:29105"/>
    </ligand>
</feature>
<dbReference type="EC" id="3.5.1.108" evidence="1"/>
<dbReference type="EMBL" id="CR628337">
    <property type="protein sequence ID" value="CAH16771.1"/>
    <property type="molecule type" value="Genomic_DNA"/>
</dbReference>
<dbReference type="RefSeq" id="WP_011216483.1">
    <property type="nucleotide sequence ID" value="NC_006369.1"/>
</dbReference>
<dbReference type="SMR" id="Q5WTJ3"/>
<dbReference type="KEGG" id="lpf:lpl2531"/>
<dbReference type="LegioList" id="lpl2531"/>
<dbReference type="HOGENOM" id="CLU_046528_1_0_6"/>
<dbReference type="UniPathway" id="UPA00359">
    <property type="reaction ID" value="UER00478"/>
</dbReference>
<dbReference type="Proteomes" id="UP000002517">
    <property type="component" value="Chromosome"/>
</dbReference>
<dbReference type="GO" id="GO:0016020">
    <property type="term" value="C:membrane"/>
    <property type="evidence" value="ECO:0007669"/>
    <property type="project" value="GOC"/>
</dbReference>
<dbReference type="GO" id="GO:0046872">
    <property type="term" value="F:metal ion binding"/>
    <property type="evidence" value="ECO:0007669"/>
    <property type="project" value="UniProtKB-KW"/>
</dbReference>
<dbReference type="GO" id="GO:0103117">
    <property type="term" value="F:UDP-3-O-acyl-N-acetylglucosamine deacetylase activity"/>
    <property type="evidence" value="ECO:0007669"/>
    <property type="project" value="UniProtKB-UniRule"/>
</dbReference>
<dbReference type="GO" id="GO:0009245">
    <property type="term" value="P:lipid A biosynthetic process"/>
    <property type="evidence" value="ECO:0007669"/>
    <property type="project" value="UniProtKB-UniRule"/>
</dbReference>
<dbReference type="Gene3D" id="3.30.230.20">
    <property type="entry name" value="lpxc deacetylase, domain 1"/>
    <property type="match status" value="1"/>
</dbReference>
<dbReference type="Gene3D" id="3.30.1700.10">
    <property type="entry name" value="lpxc deacetylase, domain 2"/>
    <property type="match status" value="1"/>
</dbReference>
<dbReference type="HAMAP" id="MF_00388">
    <property type="entry name" value="LpxC"/>
    <property type="match status" value="1"/>
</dbReference>
<dbReference type="InterPro" id="IPR020568">
    <property type="entry name" value="Ribosomal_Su5_D2-typ_SF"/>
</dbReference>
<dbReference type="InterPro" id="IPR004463">
    <property type="entry name" value="UDP-acyl_GlcNac_deAcase"/>
</dbReference>
<dbReference type="InterPro" id="IPR011334">
    <property type="entry name" value="UDP-acyl_GlcNac_deAcase_C"/>
</dbReference>
<dbReference type="InterPro" id="IPR015870">
    <property type="entry name" value="UDP-acyl_N-AcGlcN_deAcase_N"/>
</dbReference>
<dbReference type="NCBIfam" id="TIGR00325">
    <property type="entry name" value="lpxC"/>
    <property type="match status" value="1"/>
</dbReference>
<dbReference type="PANTHER" id="PTHR33694">
    <property type="entry name" value="UDP-3-O-ACYL-N-ACETYLGLUCOSAMINE DEACETYLASE 1, MITOCHONDRIAL-RELATED"/>
    <property type="match status" value="1"/>
</dbReference>
<dbReference type="PANTHER" id="PTHR33694:SF1">
    <property type="entry name" value="UDP-3-O-ACYL-N-ACETYLGLUCOSAMINE DEACETYLASE 1, MITOCHONDRIAL-RELATED"/>
    <property type="match status" value="1"/>
</dbReference>
<dbReference type="Pfam" id="PF03331">
    <property type="entry name" value="LpxC"/>
    <property type="match status" value="1"/>
</dbReference>
<dbReference type="SUPFAM" id="SSF54211">
    <property type="entry name" value="Ribosomal protein S5 domain 2-like"/>
    <property type="match status" value="2"/>
</dbReference>
<reference key="1">
    <citation type="journal article" date="2004" name="Nat. Genet.">
        <title>Evidence in the Legionella pneumophila genome for exploitation of host cell functions and high genome plasticity.</title>
        <authorList>
            <person name="Cazalet C."/>
            <person name="Rusniok C."/>
            <person name="Brueggemann H."/>
            <person name="Zidane N."/>
            <person name="Magnier A."/>
            <person name="Ma L."/>
            <person name="Tichit M."/>
            <person name="Jarraud S."/>
            <person name="Bouchier C."/>
            <person name="Vandenesch F."/>
            <person name="Kunst F."/>
            <person name="Etienne J."/>
            <person name="Glaser P."/>
            <person name="Buchrieser C."/>
        </authorList>
    </citation>
    <scope>NUCLEOTIDE SEQUENCE [LARGE SCALE GENOMIC DNA]</scope>
    <source>
        <strain>Lens</strain>
    </source>
</reference>
<protein>
    <recommendedName>
        <fullName evidence="1">UDP-3-O-acyl-N-acetylglucosamine deacetylase</fullName>
        <shortName evidence="1">UDP-3-O-acyl-GlcNAc deacetylase</shortName>
        <ecNumber evidence="1">3.5.1.108</ecNumber>
    </recommendedName>
    <alternativeName>
        <fullName evidence="1">UDP-3-O-[R-3-hydroxymyristoyl]-N-acetylglucosamine deacetylase</fullName>
    </alternativeName>
</protein>
<proteinExistence type="inferred from homology"/>
<keyword id="KW-0378">Hydrolase</keyword>
<keyword id="KW-0441">Lipid A biosynthesis</keyword>
<keyword id="KW-0444">Lipid biosynthesis</keyword>
<keyword id="KW-0443">Lipid metabolism</keyword>
<keyword id="KW-0479">Metal-binding</keyword>
<keyword id="KW-0862">Zinc</keyword>
<comment type="function">
    <text evidence="1">Catalyzes the hydrolysis of UDP-3-O-myristoyl-N-acetylglucosamine to form UDP-3-O-myristoylglucosamine and acetate, the committed step in lipid A biosynthesis.</text>
</comment>
<comment type="catalytic activity">
    <reaction evidence="1">
        <text>a UDP-3-O-[(3R)-3-hydroxyacyl]-N-acetyl-alpha-D-glucosamine + H2O = a UDP-3-O-[(3R)-3-hydroxyacyl]-alpha-D-glucosamine + acetate</text>
        <dbReference type="Rhea" id="RHEA:67816"/>
        <dbReference type="ChEBI" id="CHEBI:15377"/>
        <dbReference type="ChEBI" id="CHEBI:30089"/>
        <dbReference type="ChEBI" id="CHEBI:137740"/>
        <dbReference type="ChEBI" id="CHEBI:173225"/>
        <dbReference type="EC" id="3.5.1.108"/>
    </reaction>
</comment>
<comment type="cofactor">
    <cofactor evidence="1">
        <name>Zn(2+)</name>
        <dbReference type="ChEBI" id="CHEBI:29105"/>
    </cofactor>
</comment>
<comment type="pathway">
    <text evidence="1">Glycolipid biosynthesis; lipid IV(A) biosynthesis; lipid IV(A) from (3R)-3-hydroxytetradecanoyl-[acyl-carrier-protein] and UDP-N-acetyl-alpha-D-glucosamine: step 2/6.</text>
</comment>
<comment type="similarity">
    <text evidence="1">Belongs to the LpxC family.</text>
</comment>
<organism>
    <name type="scientific">Legionella pneumophila (strain Lens)</name>
    <dbReference type="NCBI Taxonomy" id="297245"/>
    <lineage>
        <taxon>Bacteria</taxon>
        <taxon>Pseudomonadati</taxon>
        <taxon>Pseudomonadota</taxon>
        <taxon>Gammaproteobacteria</taxon>
        <taxon>Legionellales</taxon>
        <taxon>Legionellaceae</taxon>
        <taxon>Legionella</taxon>
    </lineage>
</organism>
<accession>Q5WTJ3</accession>
<gene>
    <name evidence="1" type="primary">lpxC</name>
    <name type="ordered locus">lpl2531</name>
</gene>
<sequence>MIKQRTPKKVIQATGVGLHSGEKVLLTLRPAPVNTGIVFRRVDLSPVVEIPASYEYVGDTMLCTTLHHGKVKIATVEHLLSALAGLGIDNAYIDVNAPEIPIMDGSAAPFVFLIQSAGIREQNAAKRYIRILKPIRVEENGKYVQFLPHKGYKITFTIGFEHPVFNDRPQTVSFDFSGTSYVKEVCRARTFGFLSDYEKLRECDLAKGGSLDNAIVVDDYRVLNEDGLRFESEFVTHKVLDAIGDLYLLGSSLIGAFEGYKSGHELNNRLLRELMIRQDAWEYTYFDTENYLPAVHPEYYPVEA</sequence>
<name>LPXC_LEGPL</name>
<evidence type="ECO:0000255" key="1">
    <source>
        <dbReference type="HAMAP-Rule" id="MF_00388"/>
    </source>
</evidence>